<accession>Q5NEY6</accession>
<reference key="1">
    <citation type="journal article" date="2005" name="Nat. Genet.">
        <title>The complete genome sequence of Francisella tularensis, the causative agent of tularemia.</title>
        <authorList>
            <person name="Larsson P."/>
            <person name="Oyston P.C.F."/>
            <person name="Chain P."/>
            <person name="Chu M.C."/>
            <person name="Duffield M."/>
            <person name="Fuxelius H.-H."/>
            <person name="Garcia E."/>
            <person name="Haelltorp G."/>
            <person name="Johansson D."/>
            <person name="Isherwood K.E."/>
            <person name="Karp P.D."/>
            <person name="Larsson E."/>
            <person name="Liu Y."/>
            <person name="Michell S."/>
            <person name="Prior J."/>
            <person name="Prior R."/>
            <person name="Malfatti S."/>
            <person name="Sjoestedt A."/>
            <person name="Svensson K."/>
            <person name="Thompson N."/>
            <person name="Vergez L."/>
            <person name="Wagg J.K."/>
            <person name="Wren B.W."/>
            <person name="Lindler L.E."/>
            <person name="Andersson S.G.E."/>
            <person name="Forsman M."/>
            <person name="Titball R.W."/>
        </authorList>
    </citation>
    <scope>NUCLEOTIDE SEQUENCE [LARGE SCALE GENOMIC DNA]</scope>
    <source>
        <strain>SCHU S4 / Schu 4</strain>
    </source>
</reference>
<feature type="chain" id="PRO_0000170539" description="Guanylate kinase">
    <location>
        <begin position="1"/>
        <end position="190"/>
    </location>
</feature>
<feature type="domain" description="Guanylate kinase-like" evidence="1">
    <location>
        <begin position="3"/>
        <end position="185"/>
    </location>
</feature>
<feature type="binding site" evidence="1">
    <location>
        <begin position="10"/>
        <end position="17"/>
    </location>
    <ligand>
        <name>ATP</name>
        <dbReference type="ChEBI" id="CHEBI:30616"/>
    </ligand>
</feature>
<sequence length="190" mass="21857">MNNYIFIVSAPSGAGKSSLLKAFLATDIGKDNYAVAISHTTREPRVGEINSREYYFVTVAEFEQLLSQDGFIEYAKVFKNYYGTSKAELDRLLALGKNIILEIDWQGAQQTRAIYGDRAKSIFILPPSLDELRKRLEKRNTDSKETIDYRMEQAQSEISHADEYDYLLVNDDFSQSLEQFCKYFEQNIQS</sequence>
<evidence type="ECO:0000255" key="1">
    <source>
        <dbReference type="HAMAP-Rule" id="MF_00328"/>
    </source>
</evidence>
<gene>
    <name evidence="1" type="primary">gmk</name>
    <name type="ordered locus">FTT_1470c</name>
</gene>
<proteinExistence type="inferred from homology"/>
<protein>
    <recommendedName>
        <fullName evidence="1">Guanylate kinase</fullName>
        <ecNumber evidence="1">2.7.4.8</ecNumber>
    </recommendedName>
    <alternativeName>
        <fullName evidence="1">GMP kinase</fullName>
    </alternativeName>
</protein>
<dbReference type="EC" id="2.7.4.8" evidence="1"/>
<dbReference type="EMBL" id="AJ749949">
    <property type="protein sequence ID" value="CAG46103.1"/>
    <property type="molecule type" value="Genomic_DNA"/>
</dbReference>
<dbReference type="RefSeq" id="WP_003022313.1">
    <property type="nucleotide sequence ID" value="NC_006570.2"/>
</dbReference>
<dbReference type="RefSeq" id="YP_170406.1">
    <property type="nucleotide sequence ID" value="NC_006570.2"/>
</dbReference>
<dbReference type="SMR" id="Q5NEY6"/>
<dbReference type="STRING" id="177416.FTT_1470c"/>
<dbReference type="DNASU" id="3192552"/>
<dbReference type="EnsemblBacteria" id="CAG46103">
    <property type="protein sequence ID" value="CAG46103"/>
    <property type="gene ID" value="FTT_1470c"/>
</dbReference>
<dbReference type="KEGG" id="ftu:FTT_1470c"/>
<dbReference type="eggNOG" id="COG0194">
    <property type="taxonomic scope" value="Bacteria"/>
</dbReference>
<dbReference type="OrthoDB" id="9808150at2"/>
<dbReference type="Proteomes" id="UP000001174">
    <property type="component" value="Chromosome"/>
</dbReference>
<dbReference type="GO" id="GO:0005829">
    <property type="term" value="C:cytosol"/>
    <property type="evidence" value="ECO:0007669"/>
    <property type="project" value="TreeGrafter"/>
</dbReference>
<dbReference type="GO" id="GO:0005524">
    <property type="term" value="F:ATP binding"/>
    <property type="evidence" value="ECO:0007669"/>
    <property type="project" value="UniProtKB-UniRule"/>
</dbReference>
<dbReference type="GO" id="GO:0004385">
    <property type="term" value="F:guanylate kinase activity"/>
    <property type="evidence" value="ECO:0007669"/>
    <property type="project" value="UniProtKB-UniRule"/>
</dbReference>
<dbReference type="CDD" id="cd00071">
    <property type="entry name" value="GMPK"/>
    <property type="match status" value="1"/>
</dbReference>
<dbReference type="FunFam" id="3.30.63.10:FF:000005">
    <property type="entry name" value="Guanylate kinase"/>
    <property type="match status" value="1"/>
</dbReference>
<dbReference type="Gene3D" id="3.30.63.10">
    <property type="entry name" value="Guanylate Kinase phosphate binding domain"/>
    <property type="match status" value="1"/>
</dbReference>
<dbReference type="Gene3D" id="3.40.50.300">
    <property type="entry name" value="P-loop containing nucleotide triphosphate hydrolases"/>
    <property type="match status" value="1"/>
</dbReference>
<dbReference type="HAMAP" id="MF_00328">
    <property type="entry name" value="Guanylate_kinase"/>
    <property type="match status" value="1"/>
</dbReference>
<dbReference type="InterPro" id="IPR008145">
    <property type="entry name" value="GK/Ca_channel_bsu"/>
</dbReference>
<dbReference type="InterPro" id="IPR008144">
    <property type="entry name" value="Guanylate_kin-like_dom"/>
</dbReference>
<dbReference type="InterPro" id="IPR017665">
    <property type="entry name" value="Guanylate_kinase"/>
</dbReference>
<dbReference type="InterPro" id="IPR027417">
    <property type="entry name" value="P-loop_NTPase"/>
</dbReference>
<dbReference type="NCBIfam" id="TIGR03263">
    <property type="entry name" value="guanyl_kin"/>
    <property type="match status" value="1"/>
</dbReference>
<dbReference type="PANTHER" id="PTHR23117:SF13">
    <property type="entry name" value="GUANYLATE KINASE"/>
    <property type="match status" value="1"/>
</dbReference>
<dbReference type="PANTHER" id="PTHR23117">
    <property type="entry name" value="GUANYLATE KINASE-RELATED"/>
    <property type="match status" value="1"/>
</dbReference>
<dbReference type="Pfam" id="PF00625">
    <property type="entry name" value="Guanylate_kin"/>
    <property type="match status" value="1"/>
</dbReference>
<dbReference type="SMART" id="SM00072">
    <property type="entry name" value="GuKc"/>
    <property type="match status" value="1"/>
</dbReference>
<dbReference type="SUPFAM" id="SSF52540">
    <property type="entry name" value="P-loop containing nucleoside triphosphate hydrolases"/>
    <property type="match status" value="1"/>
</dbReference>
<dbReference type="PROSITE" id="PS50052">
    <property type="entry name" value="GUANYLATE_KINASE_2"/>
    <property type="match status" value="1"/>
</dbReference>
<comment type="function">
    <text evidence="1">Essential for recycling GMP and indirectly, cGMP.</text>
</comment>
<comment type="catalytic activity">
    <reaction evidence="1">
        <text>GMP + ATP = GDP + ADP</text>
        <dbReference type="Rhea" id="RHEA:20780"/>
        <dbReference type="ChEBI" id="CHEBI:30616"/>
        <dbReference type="ChEBI" id="CHEBI:58115"/>
        <dbReference type="ChEBI" id="CHEBI:58189"/>
        <dbReference type="ChEBI" id="CHEBI:456216"/>
        <dbReference type="EC" id="2.7.4.8"/>
    </reaction>
</comment>
<comment type="subcellular location">
    <subcellularLocation>
        <location evidence="1">Cytoplasm</location>
    </subcellularLocation>
</comment>
<comment type="similarity">
    <text evidence="1">Belongs to the guanylate kinase family.</text>
</comment>
<name>KGUA_FRATT</name>
<keyword id="KW-0067">ATP-binding</keyword>
<keyword id="KW-0963">Cytoplasm</keyword>
<keyword id="KW-0418">Kinase</keyword>
<keyword id="KW-0547">Nucleotide-binding</keyword>
<keyword id="KW-1185">Reference proteome</keyword>
<keyword id="KW-0808">Transferase</keyword>
<organism>
    <name type="scientific">Francisella tularensis subsp. tularensis (strain SCHU S4 / Schu 4)</name>
    <dbReference type="NCBI Taxonomy" id="177416"/>
    <lineage>
        <taxon>Bacteria</taxon>
        <taxon>Pseudomonadati</taxon>
        <taxon>Pseudomonadota</taxon>
        <taxon>Gammaproteobacteria</taxon>
        <taxon>Thiotrichales</taxon>
        <taxon>Francisellaceae</taxon>
        <taxon>Francisella</taxon>
    </lineage>
</organism>